<feature type="chain" id="PRO_1000006330" description="Serine hydroxymethyltransferase">
    <location>
        <begin position="1"/>
        <end position="420"/>
    </location>
</feature>
<feature type="binding site" evidence="1">
    <location>
        <position position="123"/>
    </location>
    <ligand>
        <name>(6S)-5,6,7,8-tetrahydrofolate</name>
        <dbReference type="ChEBI" id="CHEBI:57453"/>
    </ligand>
</feature>
<feature type="binding site" evidence="1">
    <location>
        <begin position="127"/>
        <end position="129"/>
    </location>
    <ligand>
        <name>(6S)-5,6,7,8-tetrahydrofolate</name>
        <dbReference type="ChEBI" id="CHEBI:57453"/>
    </ligand>
</feature>
<feature type="binding site" evidence="1">
    <location>
        <begin position="357"/>
        <end position="359"/>
    </location>
    <ligand>
        <name>(6S)-5,6,7,8-tetrahydrofolate</name>
        <dbReference type="ChEBI" id="CHEBI:57453"/>
    </ligand>
</feature>
<feature type="site" description="Plays an important role in substrate specificity" evidence="1">
    <location>
        <position position="231"/>
    </location>
</feature>
<feature type="modified residue" description="N6-(pyridoxal phosphate)lysine" evidence="1">
    <location>
        <position position="232"/>
    </location>
</feature>
<name>GLYA_STRPD</name>
<comment type="function">
    <text evidence="1">Catalyzes the reversible interconversion of serine and glycine with tetrahydrofolate (THF) serving as the one-carbon carrier. This reaction serves as the major source of one-carbon groups required for the biosynthesis of purines, thymidylate, methionine, and other important biomolecules. Also exhibits THF-independent aldolase activity toward beta-hydroxyamino acids, producing glycine and aldehydes, via a retro-aldol mechanism.</text>
</comment>
<comment type="catalytic activity">
    <reaction evidence="1">
        <text>(6R)-5,10-methylene-5,6,7,8-tetrahydrofolate + glycine + H2O = (6S)-5,6,7,8-tetrahydrofolate + L-serine</text>
        <dbReference type="Rhea" id="RHEA:15481"/>
        <dbReference type="ChEBI" id="CHEBI:15377"/>
        <dbReference type="ChEBI" id="CHEBI:15636"/>
        <dbReference type="ChEBI" id="CHEBI:33384"/>
        <dbReference type="ChEBI" id="CHEBI:57305"/>
        <dbReference type="ChEBI" id="CHEBI:57453"/>
        <dbReference type="EC" id="2.1.2.1"/>
    </reaction>
</comment>
<comment type="cofactor">
    <cofactor evidence="1">
        <name>pyridoxal 5'-phosphate</name>
        <dbReference type="ChEBI" id="CHEBI:597326"/>
    </cofactor>
</comment>
<comment type="pathway">
    <text evidence="1">One-carbon metabolism; tetrahydrofolate interconversion.</text>
</comment>
<comment type="pathway">
    <text evidence="1">Amino-acid biosynthesis; glycine biosynthesis; glycine from L-serine: step 1/1.</text>
</comment>
<comment type="subunit">
    <text evidence="1">Homodimer.</text>
</comment>
<comment type="subcellular location">
    <subcellularLocation>
        <location evidence="1">Cytoplasm</location>
    </subcellularLocation>
</comment>
<comment type="similarity">
    <text evidence="1">Belongs to the SHMT family.</text>
</comment>
<organism>
    <name type="scientific">Streptococcus pyogenes serotype M2 (strain MGAS10270)</name>
    <dbReference type="NCBI Taxonomy" id="370552"/>
    <lineage>
        <taxon>Bacteria</taxon>
        <taxon>Bacillati</taxon>
        <taxon>Bacillota</taxon>
        <taxon>Bacilli</taxon>
        <taxon>Lactobacillales</taxon>
        <taxon>Streptococcaceae</taxon>
        <taxon>Streptococcus</taxon>
    </lineage>
</organism>
<dbReference type="EC" id="2.1.2.1" evidence="1"/>
<dbReference type="EMBL" id="CP000260">
    <property type="protein sequence ID" value="ABF34046.1"/>
    <property type="molecule type" value="Genomic_DNA"/>
</dbReference>
<dbReference type="SMR" id="Q1JGU8"/>
<dbReference type="KEGG" id="sph:MGAS10270_Spy0981"/>
<dbReference type="HOGENOM" id="CLU_022477_2_1_9"/>
<dbReference type="UniPathway" id="UPA00193"/>
<dbReference type="UniPathway" id="UPA00288">
    <property type="reaction ID" value="UER01023"/>
</dbReference>
<dbReference type="Proteomes" id="UP000002436">
    <property type="component" value="Chromosome"/>
</dbReference>
<dbReference type="GO" id="GO:0005829">
    <property type="term" value="C:cytosol"/>
    <property type="evidence" value="ECO:0007669"/>
    <property type="project" value="TreeGrafter"/>
</dbReference>
<dbReference type="GO" id="GO:0004372">
    <property type="term" value="F:glycine hydroxymethyltransferase activity"/>
    <property type="evidence" value="ECO:0007669"/>
    <property type="project" value="UniProtKB-UniRule"/>
</dbReference>
<dbReference type="GO" id="GO:0030170">
    <property type="term" value="F:pyridoxal phosphate binding"/>
    <property type="evidence" value="ECO:0007669"/>
    <property type="project" value="UniProtKB-UniRule"/>
</dbReference>
<dbReference type="GO" id="GO:0019264">
    <property type="term" value="P:glycine biosynthetic process from serine"/>
    <property type="evidence" value="ECO:0007669"/>
    <property type="project" value="UniProtKB-UniRule"/>
</dbReference>
<dbReference type="GO" id="GO:0035999">
    <property type="term" value="P:tetrahydrofolate interconversion"/>
    <property type="evidence" value="ECO:0007669"/>
    <property type="project" value="UniProtKB-UniRule"/>
</dbReference>
<dbReference type="CDD" id="cd00378">
    <property type="entry name" value="SHMT"/>
    <property type="match status" value="1"/>
</dbReference>
<dbReference type="FunFam" id="3.40.640.10:FF:000001">
    <property type="entry name" value="Serine hydroxymethyltransferase"/>
    <property type="match status" value="1"/>
</dbReference>
<dbReference type="Gene3D" id="3.90.1150.10">
    <property type="entry name" value="Aspartate Aminotransferase, domain 1"/>
    <property type="match status" value="1"/>
</dbReference>
<dbReference type="Gene3D" id="3.40.640.10">
    <property type="entry name" value="Type I PLP-dependent aspartate aminotransferase-like (Major domain)"/>
    <property type="match status" value="1"/>
</dbReference>
<dbReference type="HAMAP" id="MF_00051">
    <property type="entry name" value="SHMT"/>
    <property type="match status" value="1"/>
</dbReference>
<dbReference type="InterPro" id="IPR015424">
    <property type="entry name" value="PyrdxlP-dep_Trfase"/>
</dbReference>
<dbReference type="InterPro" id="IPR015421">
    <property type="entry name" value="PyrdxlP-dep_Trfase_major"/>
</dbReference>
<dbReference type="InterPro" id="IPR015422">
    <property type="entry name" value="PyrdxlP-dep_Trfase_small"/>
</dbReference>
<dbReference type="InterPro" id="IPR001085">
    <property type="entry name" value="Ser_HO-MeTrfase"/>
</dbReference>
<dbReference type="InterPro" id="IPR049943">
    <property type="entry name" value="Ser_HO-MeTrfase-like"/>
</dbReference>
<dbReference type="InterPro" id="IPR019798">
    <property type="entry name" value="Ser_HO-MeTrfase_PLP_BS"/>
</dbReference>
<dbReference type="InterPro" id="IPR039429">
    <property type="entry name" value="SHMT-like_dom"/>
</dbReference>
<dbReference type="NCBIfam" id="NF000586">
    <property type="entry name" value="PRK00011.1"/>
    <property type="match status" value="1"/>
</dbReference>
<dbReference type="PANTHER" id="PTHR11680">
    <property type="entry name" value="SERINE HYDROXYMETHYLTRANSFERASE"/>
    <property type="match status" value="1"/>
</dbReference>
<dbReference type="PANTHER" id="PTHR11680:SF35">
    <property type="entry name" value="SERINE HYDROXYMETHYLTRANSFERASE 1"/>
    <property type="match status" value="1"/>
</dbReference>
<dbReference type="Pfam" id="PF00464">
    <property type="entry name" value="SHMT"/>
    <property type="match status" value="1"/>
</dbReference>
<dbReference type="PIRSF" id="PIRSF000412">
    <property type="entry name" value="SHMT"/>
    <property type="match status" value="1"/>
</dbReference>
<dbReference type="SUPFAM" id="SSF53383">
    <property type="entry name" value="PLP-dependent transferases"/>
    <property type="match status" value="1"/>
</dbReference>
<dbReference type="PROSITE" id="PS00096">
    <property type="entry name" value="SHMT"/>
    <property type="match status" value="1"/>
</dbReference>
<accession>Q1JGU8</accession>
<keyword id="KW-0028">Amino-acid biosynthesis</keyword>
<keyword id="KW-0963">Cytoplasm</keyword>
<keyword id="KW-0554">One-carbon metabolism</keyword>
<keyword id="KW-0663">Pyridoxal phosphate</keyword>
<keyword id="KW-0808">Transferase</keyword>
<gene>
    <name evidence="1" type="primary">glyA</name>
    <name type="ordered locus">MGAS10270_Spy0981</name>
</gene>
<proteinExistence type="inferred from homology"/>
<protein>
    <recommendedName>
        <fullName evidence="1">Serine hydroxymethyltransferase</fullName>
        <shortName evidence="1">SHMT</shortName>
        <shortName evidence="1">Serine methylase</shortName>
        <ecNumber evidence="1">2.1.2.1</ecNumber>
    </recommendedName>
</protein>
<evidence type="ECO:0000255" key="1">
    <source>
        <dbReference type="HAMAP-Rule" id="MF_00051"/>
    </source>
</evidence>
<sequence length="420" mass="45338">MTMIFDKGNVEDFDKELWDAIHAEEERQEHHIELIASENMVSKAVMAAQGSVLTNKYAEGYPGNRYYGGTECVDIVETLAIERAKKLFGAAFANVQAHSGSQANAAAYMALIEAGDTVLGMDLAAGGHLTHGSPVNFSGKTYHFVGYSVDADTEMLNYEAILEQAKAVQPKLIVAGASAYSRSIDFEKFRAIADHVDAYLMVDMAHIAGLVAAGVHPSPVPYAHIVTSTTHKTLRGPRGGLILTNDEALAKKINSAVFPGLQGGPLEHVIAAKAVAFKEALDPAFKDYAQAIIDNTAAMAAVFAQDDRFRLISGGTDNHVFLVDVTKVIANGKLAQNLLDEVNITLNKNAIPFETLSPFKTSGIRIGCAAITSRGMGVKESQTIAHLIIKALVNHDQETILEEVRQEVRQLTDAFPLYKK</sequence>
<reference key="1">
    <citation type="journal article" date="2006" name="Proc. Natl. Acad. Sci. U.S.A.">
        <title>Molecular genetic anatomy of inter- and intraserotype variation in the human bacterial pathogen group A Streptococcus.</title>
        <authorList>
            <person name="Beres S.B."/>
            <person name="Richter E.W."/>
            <person name="Nagiec M.J."/>
            <person name="Sumby P."/>
            <person name="Porcella S.F."/>
            <person name="DeLeo F.R."/>
            <person name="Musser J.M."/>
        </authorList>
    </citation>
    <scope>NUCLEOTIDE SEQUENCE [LARGE SCALE GENOMIC DNA]</scope>
    <source>
        <strain>MGAS10270</strain>
    </source>
</reference>